<evidence type="ECO:0000269" key="1">
    <source>
    </source>
</evidence>
<evidence type="ECO:0000269" key="2">
    <source>
    </source>
</evidence>
<evidence type="ECO:0000305" key="3"/>
<accession>O13699</accession>
<keyword id="KW-0469">Meiosis</keyword>
<keyword id="KW-0496">Mitochondrion</keyword>
<keyword id="KW-1185">Reference proteome</keyword>
<comment type="function">
    <text evidence="1">Has a role in meiosis.</text>
</comment>
<comment type="subcellular location">
    <subcellularLocation>
        <location evidence="2">Mitochondrion</location>
    </subcellularLocation>
</comment>
<comment type="similarity">
    <text evidence="3">Belongs to the UPF0300 family.</text>
</comment>
<sequence>MLSFGGSLLSHSDIASRNKFSIDYSQFKAFFPGNWKFSNSKDKKPVRSPTLDEPVGDVDIDIFDVSKFYPLKRLSSIPEKIRANYHEELQTTSYDLVRNPFTHGLFCVVFYHQNKSYLKMGVTDNFNAFEEDSRVYQYGVNHKLSCKNLLLAINYSPKTYTKIFDFLRNGRAPLQVLVHHCMLYNFYPEDFQDALWCAVQAHVMNQVRLGRATLLHARACYQKIGDIRMYLIDPHDLYFSPNSLKWLIICSKQFQALVHLEVKMDTLKIFRRRSKYFNLARSCVSGFELSWLIMMTSIGSNASAVPVHAYLASKRILYPSIIPEEIFFMRKFDSSLFKDIKNIHELLGFLGRLFMDLQDCEKFHHDYTEYHCYRIGKPLYQNYEEEALRKKSQGVKDADFIKPLVTNTRTAEKYKAFFEYKRNIVLKKQS</sequence>
<gene>
    <name type="primary">mug132</name>
    <name type="ORF">SPAC11G7.06c</name>
</gene>
<proteinExistence type="evidence at protein level"/>
<protein>
    <recommendedName>
        <fullName>Meiotically up-regulated gene 132 protein</fullName>
    </recommendedName>
</protein>
<feature type="chain" id="PRO_0000118858" description="Meiotically up-regulated gene 132 protein">
    <location>
        <begin position="1"/>
        <end position="430"/>
    </location>
</feature>
<reference key="1">
    <citation type="journal article" date="2002" name="Nature">
        <title>The genome sequence of Schizosaccharomyces pombe.</title>
        <authorList>
            <person name="Wood V."/>
            <person name="Gwilliam R."/>
            <person name="Rajandream M.A."/>
            <person name="Lyne M.H."/>
            <person name="Lyne R."/>
            <person name="Stewart A."/>
            <person name="Sgouros J.G."/>
            <person name="Peat N."/>
            <person name="Hayles J."/>
            <person name="Baker S.G."/>
            <person name="Basham D."/>
            <person name="Bowman S."/>
            <person name="Brooks K."/>
            <person name="Brown D."/>
            <person name="Brown S."/>
            <person name="Chillingworth T."/>
            <person name="Churcher C.M."/>
            <person name="Collins M."/>
            <person name="Connor R."/>
            <person name="Cronin A."/>
            <person name="Davis P."/>
            <person name="Feltwell T."/>
            <person name="Fraser A."/>
            <person name="Gentles S."/>
            <person name="Goble A."/>
            <person name="Hamlin N."/>
            <person name="Harris D.E."/>
            <person name="Hidalgo J."/>
            <person name="Hodgson G."/>
            <person name="Holroyd S."/>
            <person name="Hornsby T."/>
            <person name="Howarth S."/>
            <person name="Huckle E.J."/>
            <person name="Hunt S."/>
            <person name="Jagels K."/>
            <person name="James K.D."/>
            <person name="Jones L."/>
            <person name="Jones M."/>
            <person name="Leather S."/>
            <person name="McDonald S."/>
            <person name="McLean J."/>
            <person name="Mooney P."/>
            <person name="Moule S."/>
            <person name="Mungall K.L."/>
            <person name="Murphy L.D."/>
            <person name="Niblett D."/>
            <person name="Odell C."/>
            <person name="Oliver K."/>
            <person name="O'Neil S."/>
            <person name="Pearson D."/>
            <person name="Quail M.A."/>
            <person name="Rabbinowitsch E."/>
            <person name="Rutherford K.M."/>
            <person name="Rutter S."/>
            <person name="Saunders D."/>
            <person name="Seeger K."/>
            <person name="Sharp S."/>
            <person name="Skelton J."/>
            <person name="Simmonds M.N."/>
            <person name="Squares R."/>
            <person name="Squares S."/>
            <person name="Stevens K."/>
            <person name="Taylor K."/>
            <person name="Taylor R.G."/>
            <person name="Tivey A."/>
            <person name="Walsh S.V."/>
            <person name="Warren T."/>
            <person name="Whitehead S."/>
            <person name="Woodward J.R."/>
            <person name="Volckaert G."/>
            <person name="Aert R."/>
            <person name="Robben J."/>
            <person name="Grymonprez B."/>
            <person name="Weltjens I."/>
            <person name="Vanstreels E."/>
            <person name="Rieger M."/>
            <person name="Schaefer M."/>
            <person name="Mueller-Auer S."/>
            <person name="Gabel C."/>
            <person name="Fuchs M."/>
            <person name="Duesterhoeft A."/>
            <person name="Fritzc C."/>
            <person name="Holzer E."/>
            <person name="Moestl D."/>
            <person name="Hilbert H."/>
            <person name="Borzym K."/>
            <person name="Langer I."/>
            <person name="Beck A."/>
            <person name="Lehrach H."/>
            <person name="Reinhardt R."/>
            <person name="Pohl T.M."/>
            <person name="Eger P."/>
            <person name="Zimmermann W."/>
            <person name="Wedler H."/>
            <person name="Wambutt R."/>
            <person name="Purnelle B."/>
            <person name="Goffeau A."/>
            <person name="Cadieu E."/>
            <person name="Dreano S."/>
            <person name="Gloux S."/>
            <person name="Lelaure V."/>
            <person name="Mottier S."/>
            <person name="Galibert F."/>
            <person name="Aves S.J."/>
            <person name="Xiang Z."/>
            <person name="Hunt C."/>
            <person name="Moore K."/>
            <person name="Hurst S.M."/>
            <person name="Lucas M."/>
            <person name="Rochet M."/>
            <person name="Gaillardin C."/>
            <person name="Tallada V.A."/>
            <person name="Garzon A."/>
            <person name="Thode G."/>
            <person name="Daga R.R."/>
            <person name="Cruzado L."/>
            <person name="Jimenez J."/>
            <person name="Sanchez M."/>
            <person name="del Rey F."/>
            <person name="Benito J."/>
            <person name="Dominguez A."/>
            <person name="Revuelta J.L."/>
            <person name="Moreno S."/>
            <person name="Armstrong J."/>
            <person name="Forsburg S.L."/>
            <person name="Cerutti L."/>
            <person name="Lowe T."/>
            <person name="McCombie W.R."/>
            <person name="Paulsen I."/>
            <person name="Potashkin J."/>
            <person name="Shpakovski G.V."/>
            <person name="Ussery D."/>
            <person name="Barrell B.G."/>
            <person name="Nurse P."/>
        </authorList>
    </citation>
    <scope>NUCLEOTIDE SEQUENCE [LARGE SCALE GENOMIC DNA]</scope>
    <source>
        <strain>972 / ATCC 24843</strain>
    </source>
</reference>
<reference key="2">
    <citation type="journal article" date="2005" name="Curr. Biol.">
        <title>A large-scale screen in S. pombe identifies seven novel genes required for critical meiotic events.</title>
        <authorList>
            <person name="Martin-Castellanos C."/>
            <person name="Blanco M."/>
            <person name="Rozalen A.E."/>
            <person name="Perez-Hidalgo L."/>
            <person name="Garcia A.I."/>
            <person name="Conde F."/>
            <person name="Mata J."/>
            <person name="Ellermeier C."/>
            <person name="Davis L."/>
            <person name="San-Segundo P."/>
            <person name="Smith G.R."/>
            <person name="Moreno S."/>
        </authorList>
    </citation>
    <scope>FUNCTION IN MEIOSIS</scope>
</reference>
<reference key="3">
    <citation type="journal article" date="2006" name="Nat. Biotechnol.">
        <title>ORFeome cloning and global analysis of protein localization in the fission yeast Schizosaccharomyces pombe.</title>
        <authorList>
            <person name="Matsuyama A."/>
            <person name="Arai R."/>
            <person name="Yashiroda Y."/>
            <person name="Shirai A."/>
            <person name="Kamata A."/>
            <person name="Sekido S."/>
            <person name="Kobayashi Y."/>
            <person name="Hashimoto A."/>
            <person name="Hamamoto M."/>
            <person name="Hiraoka Y."/>
            <person name="Horinouchi S."/>
            <person name="Yoshida M."/>
        </authorList>
    </citation>
    <scope>SUBCELLULAR LOCATION [LARGE SCALE ANALYSIS]</scope>
</reference>
<organism>
    <name type="scientific">Schizosaccharomyces pombe (strain 972 / ATCC 24843)</name>
    <name type="common">Fission yeast</name>
    <dbReference type="NCBI Taxonomy" id="284812"/>
    <lineage>
        <taxon>Eukaryota</taxon>
        <taxon>Fungi</taxon>
        <taxon>Dikarya</taxon>
        <taxon>Ascomycota</taxon>
        <taxon>Taphrinomycotina</taxon>
        <taxon>Schizosaccharomycetes</taxon>
        <taxon>Schizosaccharomycetales</taxon>
        <taxon>Schizosaccharomycetaceae</taxon>
        <taxon>Schizosaccharomyces</taxon>
    </lineage>
</organism>
<name>MU132_SCHPO</name>
<dbReference type="EMBL" id="CU329670">
    <property type="protein sequence ID" value="CAB16211.1"/>
    <property type="molecule type" value="Genomic_DNA"/>
</dbReference>
<dbReference type="PIR" id="T37549">
    <property type="entry name" value="T37549"/>
</dbReference>
<dbReference type="RefSeq" id="NP_594400.1">
    <property type="nucleotide sequence ID" value="NM_001019823.2"/>
</dbReference>
<dbReference type="iPTMnet" id="O13699"/>
<dbReference type="PaxDb" id="4896-SPAC11G7.06c.1"/>
<dbReference type="EnsemblFungi" id="SPAC11G7.06c.1">
    <property type="protein sequence ID" value="SPAC11G7.06c.1:pep"/>
    <property type="gene ID" value="SPAC11G7.06c"/>
</dbReference>
<dbReference type="GeneID" id="2543018"/>
<dbReference type="KEGG" id="spo:2543018"/>
<dbReference type="PomBase" id="SPAC11G7.06c">
    <property type="gene designation" value="mug132"/>
</dbReference>
<dbReference type="VEuPathDB" id="FungiDB:SPAC11G7.06c"/>
<dbReference type="HOGENOM" id="CLU_638030_0_0_1"/>
<dbReference type="InParanoid" id="O13699"/>
<dbReference type="OMA" id="FMDLQDC"/>
<dbReference type="PhylomeDB" id="O13699"/>
<dbReference type="PRO" id="PR:O13699"/>
<dbReference type="Proteomes" id="UP000002485">
    <property type="component" value="Chromosome I"/>
</dbReference>
<dbReference type="GO" id="GO:0005739">
    <property type="term" value="C:mitochondrion"/>
    <property type="evidence" value="ECO:0007669"/>
    <property type="project" value="UniProtKB-SubCell"/>
</dbReference>
<dbReference type="GO" id="GO:0051321">
    <property type="term" value="P:meiotic cell cycle"/>
    <property type="evidence" value="ECO:0007669"/>
    <property type="project" value="UniProtKB-KW"/>
</dbReference>
<dbReference type="InterPro" id="IPR013903">
    <property type="entry name" value="Meiotic_expression"/>
</dbReference>
<dbReference type="Pfam" id="PF08594">
    <property type="entry name" value="UPF0300"/>
    <property type="match status" value="1"/>
</dbReference>